<organism>
    <name type="scientific">Bos taurus</name>
    <name type="common">Bovine</name>
    <dbReference type="NCBI Taxonomy" id="9913"/>
    <lineage>
        <taxon>Eukaryota</taxon>
        <taxon>Metazoa</taxon>
        <taxon>Chordata</taxon>
        <taxon>Craniata</taxon>
        <taxon>Vertebrata</taxon>
        <taxon>Euteleostomi</taxon>
        <taxon>Mammalia</taxon>
        <taxon>Eutheria</taxon>
        <taxon>Laurasiatheria</taxon>
        <taxon>Artiodactyla</taxon>
        <taxon>Ruminantia</taxon>
        <taxon>Pecora</taxon>
        <taxon>Bovidae</taxon>
        <taxon>Bovinae</taxon>
        <taxon>Bos</taxon>
    </lineage>
</organism>
<reference key="1">
    <citation type="submission" date="2006-02" db="EMBL/GenBank/DDBJ databases">
        <authorList>
            <consortium name="NIH - Mammalian Gene Collection (MGC) project"/>
        </authorList>
    </citation>
    <scope>NUCLEOTIDE SEQUENCE [LARGE SCALE MRNA]</scope>
    <source>
        <strain>Hereford</strain>
        <tissue>Uterus</tissue>
    </source>
</reference>
<evidence type="ECO:0000250" key="1"/>
<evidence type="ECO:0000256" key="2">
    <source>
        <dbReference type="SAM" id="MobiDB-lite"/>
    </source>
</evidence>
<evidence type="ECO:0000305" key="3"/>
<protein>
    <recommendedName>
        <fullName>RBPJ-interacting and tubulin-associated protein 1</fullName>
    </recommendedName>
    <alternativeName>
        <fullName>RBPJ-interacting and tubulin-associated protein</fullName>
    </alternativeName>
</protein>
<keyword id="KW-0963">Cytoplasm</keyword>
<keyword id="KW-0206">Cytoskeleton</keyword>
<keyword id="KW-0524">Neurogenesis</keyword>
<keyword id="KW-0914">Notch signaling pathway</keyword>
<keyword id="KW-0539">Nucleus</keyword>
<keyword id="KW-1185">Reference proteome</keyword>
<gene>
    <name type="primary">RITA1</name>
    <name type="synonym">RITA</name>
</gene>
<proteinExistence type="evidence at transcript level"/>
<dbReference type="EMBL" id="BC113269">
    <property type="protein sequence ID" value="AAI13270.1"/>
    <property type="molecule type" value="mRNA"/>
</dbReference>
<dbReference type="RefSeq" id="NP_001039809.1">
    <property type="nucleotide sequence ID" value="NM_001046344.1"/>
</dbReference>
<dbReference type="FunCoup" id="Q2HJ75">
    <property type="interactions" value="513"/>
</dbReference>
<dbReference type="STRING" id="9913.ENSBTAP00000029525"/>
<dbReference type="PaxDb" id="9913-ENSBTAP00000029525"/>
<dbReference type="GeneID" id="533158"/>
<dbReference type="KEGG" id="bta:533158"/>
<dbReference type="CTD" id="84934"/>
<dbReference type="eggNOG" id="ENOG502S61Y">
    <property type="taxonomic scope" value="Eukaryota"/>
</dbReference>
<dbReference type="HOGENOM" id="CLU_062251_0_0_1"/>
<dbReference type="InParanoid" id="Q2HJ75"/>
<dbReference type="OrthoDB" id="10061257at2759"/>
<dbReference type="TreeFam" id="TF337291"/>
<dbReference type="Proteomes" id="UP000009136">
    <property type="component" value="Unplaced"/>
</dbReference>
<dbReference type="GO" id="GO:0005813">
    <property type="term" value="C:centrosome"/>
    <property type="evidence" value="ECO:0000250"/>
    <property type="project" value="UniProtKB"/>
</dbReference>
<dbReference type="GO" id="GO:0005737">
    <property type="term" value="C:cytoplasm"/>
    <property type="evidence" value="ECO:0000250"/>
    <property type="project" value="UniProtKB"/>
</dbReference>
<dbReference type="GO" id="GO:0005634">
    <property type="term" value="C:nucleus"/>
    <property type="evidence" value="ECO:0000250"/>
    <property type="project" value="UniProtKB"/>
</dbReference>
<dbReference type="GO" id="GO:0015631">
    <property type="term" value="F:tubulin binding"/>
    <property type="evidence" value="ECO:0000250"/>
    <property type="project" value="UniProtKB"/>
</dbReference>
<dbReference type="GO" id="GO:0045746">
    <property type="term" value="P:negative regulation of Notch signaling pathway"/>
    <property type="evidence" value="ECO:0000250"/>
    <property type="project" value="UniProtKB"/>
</dbReference>
<dbReference type="GO" id="GO:0022008">
    <property type="term" value="P:neurogenesis"/>
    <property type="evidence" value="ECO:0000250"/>
    <property type="project" value="UniProtKB"/>
</dbReference>
<dbReference type="GO" id="GO:0007219">
    <property type="term" value="P:Notch signaling pathway"/>
    <property type="evidence" value="ECO:0007669"/>
    <property type="project" value="UniProtKB-KW"/>
</dbReference>
<dbReference type="GO" id="GO:0051168">
    <property type="term" value="P:nuclear export"/>
    <property type="evidence" value="ECO:0000318"/>
    <property type="project" value="GO_Central"/>
</dbReference>
<dbReference type="InterPro" id="IPR031418">
    <property type="entry name" value="RITA1"/>
</dbReference>
<dbReference type="PANTHER" id="PTHR34917">
    <property type="entry name" value="RBPJ-INTERACTING AND TUBULIN-ASSOCIATED PROTEIN 1"/>
    <property type="match status" value="1"/>
</dbReference>
<dbReference type="PANTHER" id="PTHR34917:SF1">
    <property type="entry name" value="RBPJ-INTERACTING AND TUBULIN-ASSOCIATED PROTEIN 1"/>
    <property type="match status" value="1"/>
</dbReference>
<dbReference type="Pfam" id="PF17066">
    <property type="entry name" value="RITA"/>
    <property type="match status" value="1"/>
</dbReference>
<accession>Q2HJ75</accession>
<name>RITA1_BOVIN</name>
<sequence length="269" mass="29087">MKTPVELAISGMQTLHVQHRGRSGYRVKVRPSYVDETLFGSPAGTRPVPPDFDPPWMKKANRSRGVGTGVSQALGANGSCESTSSSGSTPTLTPRKKNKYRLISHTPSYCDESLFGSRQEGAGWEAKWMARGDAAKLHALFWTPPATPRGSHSPRPRETPVRCVHPADLSKTEHRVMASSRRLSVDGLDTPRPLRRERSHSLTHPNVPSTGHTPASSPCTSGPRDPRPAPSGVTFRSPLVTPRAGSVSVSVPTTPRQGGATQKTKPPWK</sequence>
<comment type="function">
    <text evidence="1">Tubulin-binding protein that acts as a negative regulator of Notch signaling pathway. Shuttles between the cytoplasm and the nucleus and mediates the nuclear export of RBPJ/RBPSUH, thereby preventing the interaction between RBPJ/RBPSUH and NICD product of Notch proteins (Notch intracellular domain), leading to down-regulate Notch-mediated transcription. May play a role in neurogenesis (By similarity).</text>
</comment>
<comment type="subunit">
    <text evidence="1">Interacts with RBPJ/RBPSUH.</text>
</comment>
<comment type="subcellular location">
    <subcellularLocation>
        <location evidence="1">Cytoplasm</location>
    </subcellularLocation>
    <subcellularLocation>
        <location evidence="1">Nucleus</location>
    </subcellularLocation>
    <subcellularLocation>
        <location evidence="1">Cytoplasm</location>
        <location evidence="1">Cytoskeleton</location>
        <location evidence="1">Microtubule organizing center</location>
        <location evidence="1">Centrosome</location>
    </subcellularLocation>
    <text evidence="1">Shuttles rapidly between the cytoplasm and the nucleus. The function of centrosome localization is still unclear (By similarity).</text>
</comment>
<comment type="similarity">
    <text evidence="3">Belongs to the RITA family.</text>
</comment>
<feature type="chain" id="PRO_0000294428" description="RBPJ-interacting and tubulin-associated protein 1">
    <location>
        <begin position="1"/>
        <end position="269"/>
    </location>
</feature>
<feature type="region of interest" description="Disordered" evidence="2">
    <location>
        <begin position="67"/>
        <end position="94"/>
    </location>
</feature>
<feature type="region of interest" description="Interaction with RBPJ/RBPSUH" evidence="1">
    <location>
        <begin position="128"/>
        <end position="156"/>
    </location>
</feature>
<feature type="region of interest" description="Disordered" evidence="2">
    <location>
        <begin position="145"/>
        <end position="269"/>
    </location>
</feature>
<feature type="region of interest" description="Interaction with tubulin" evidence="1">
    <location>
        <begin position="156"/>
        <end position="269"/>
    </location>
</feature>
<feature type="short sequence motif" description="Nuclear export signal" evidence="1">
    <location>
        <begin position="5"/>
        <end position="17"/>
    </location>
</feature>
<feature type="short sequence motif" description="Nuclear localization signal" evidence="1">
    <location>
        <begin position="92"/>
        <end position="108"/>
    </location>
</feature>
<feature type="compositionally biased region" description="Low complexity" evidence="2">
    <location>
        <begin position="79"/>
        <end position="93"/>
    </location>
</feature>
<feature type="compositionally biased region" description="Polar residues" evidence="2">
    <location>
        <begin position="202"/>
        <end position="220"/>
    </location>
</feature>
<feature type="compositionally biased region" description="Polar residues" evidence="2">
    <location>
        <begin position="247"/>
        <end position="269"/>
    </location>
</feature>